<protein>
    <recommendedName>
        <fullName>Homeobox protein engrailed</fullName>
    </recommendedName>
    <alternativeName>
        <fullName>SU-HB-En</fullName>
    </alternativeName>
</protein>
<reference key="1">
    <citation type="submission" date="1988-07" db="EMBL/GenBank/DDBJ databases">
        <authorList>
            <person name="Dolecki G.J."/>
        </authorList>
    </citation>
    <scope>NUCLEOTIDE SEQUENCE [GENOMIC DNA]</scope>
</reference>
<reference key="2">
    <citation type="journal article" date="1988" name="Gene">
        <title>An engrailed class homeo box gene in sea urchins.</title>
        <authorList>
            <person name="Dolecki G.J."/>
            <person name="Humphreys T."/>
        </authorList>
    </citation>
    <scope>NUCLEOTIDE SEQUENCE [GENOMIC DNA] OF 20-154</scope>
</reference>
<name>HMEN_TRIGR</name>
<accession>P09532</accession>
<sequence length="154" mass="17708">NSGYSNIHNEMLFDFVVFVFTGPRTRKVKRREKKADEKRPRTAFSASQLQRLKQEFQQSNYLTEQRRRSLAKELTLSESQIKIWFQNKRAKIKKASGLKNDLARQLMAQGLYNHSTVPLEADSMDTKLLNGQNTSGDCSRSDYTSDSDGDSLTH</sequence>
<evidence type="ECO:0000255" key="1">
    <source>
        <dbReference type="PROSITE-ProRule" id="PRU00108"/>
    </source>
</evidence>
<evidence type="ECO:0000256" key="2">
    <source>
        <dbReference type="SAM" id="MobiDB-lite"/>
    </source>
</evidence>
<evidence type="ECO:0000305" key="3"/>
<feature type="chain" id="PRO_0000196090" description="Homeobox protein engrailed">
    <location>
        <begin position="1" status="less than"/>
        <end position="154"/>
    </location>
</feature>
<feature type="DNA-binding region" description="Homeobox" evidence="1">
    <location>
        <begin position="37"/>
        <end position="96"/>
    </location>
</feature>
<feature type="region of interest" description="Disordered" evidence="2">
    <location>
        <begin position="127"/>
        <end position="154"/>
    </location>
</feature>
<feature type="compositionally biased region" description="Polar residues" evidence="2">
    <location>
        <begin position="129"/>
        <end position="144"/>
    </location>
</feature>
<feature type="compositionally biased region" description="Acidic residues" evidence="2">
    <location>
        <begin position="145"/>
        <end position="154"/>
    </location>
</feature>
<feature type="non-terminal residue">
    <location>
        <position position="1"/>
    </location>
</feature>
<proteinExistence type="inferred from homology"/>
<organism>
    <name type="scientific">Tripneustes gratilla</name>
    <name type="common">Hawaian sea urchin</name>
    <name type="synonym">Echinus gratilla</name>
    <dbReference type="NCBI Taxonomy" id="7673"/>
    <lineage>
        <taxon>Eukaryota</taxon>
        <taxon>Metazoa</taxon>
        <taxon>Echinodermata</taxon>
        <taxon>Eleutherozoa</taxon>
        <taxon>Echinozoa</taxon>
        <taxon>Echinoidea</taxon>
        <taxon>Euechinoidea</taxon>
        <taxon>Echinacea</taxon>
        <taxon>Temnopleuroida</taxon>
        <taxon>Toxopneustidae</taxon>
        <taxon>Tripneustes</taxon>
    </lineage>
</organism>
<dbReference type="EMBL" id="M19709">
    <property type="protein sequence ID" value="AAA30090.1"/>
    <property type="molecule type" value="Genomic_DNA"/>
</dbReference>
<dbReference type="PIR" id="JT0287">
    <property type="entry name" value="JT0287"/>
</dbReference>
<dbReference type="SMR" id="P09532"/>
<dbReference type="GO" id="GO:0005634">
    <property type="term" value="C:nucleus"/>
    <property type="evidence" value="ECO:0007669"/>
    <property type="project" value="UniProtKB-SubCell"/>
</dbReference>
<dbReference type="GO" id="GO:0000981">
    <property type="term" value="F:DNA-binding transcription factor activity, RNA polymerase II-specific"/>
    <property type="evidence" value="ECO:0007669"/>
    <property type="project" value="InterPro"/>
</dbReference>
<dbReference type="GO" id="GO:0000978">
    <property type="term" value="F:RNA polymerase II cis-regulatory region sequence-specific DNA binding"/>
    <property type="evidence" value="ECO:0007669"/>
    <property type="project" value="TreeGrafter"/>
</dbReference>
<dbReference type="GO" id="GO:0030182">
    <property type="term" value="P:neuron differentiation"/>
    <property type="evidence" value="ECO:0007669"/>
    <property type="project" value="TreeGrafter"/>
</dbReference>
<dbReference type="CDD" id="cd00086">
    <property type="entry name" value="homeodomain"/>
    <property type="match status" value="1"/>
</dbReference>
<dbReference type="Gene3D" id="1.10.10.60">
    <property type="entry name" value="Homeodomain-like"/>
    <property type="match status" value="1"/>
</dbReference>
<dbReference type="InterPro" id="IPR050720">
    <property type="entry name" value="Engrailed_Homeobox_TFs"/>
</dbReference>
<dbReference type="InterPro" id="IPR001356">
    <property type="entry name" value="HD"/>
</dbReference>
<dbReference type="InterPro" id="IPR000747">
    <property type="entry name" value="HD_engrailed"/>
</dbReference>
<dbReference type="InterPro" id="IPR020479">
    <property type="entry name" value="HD_metazoa"/>
</dbReference>
<dbReference type="InterPro" id="IPR019549">
    <property type="entry name" value="Homeobox-engrailed_C-terminal"/>
</dbReference>
<dbReference type="InterPro" id="IPR019737">
    <property type="entry name" value="Homeobox-engrailed_CS"/>
</dbReference>
<dbReference type="InterPro" id="IPR017970">
    <property type="entry name" value="Homeobox_CS"/>
</dbReference>
<dbReference type="InterPro" id="IPR009057">
    <property type="entry name" value="Homeodomain-like_sf"/>
</dbReference>
<dbReference type="PANTHER" id="PTHR24341">
    <property type="entry name" value="HOMEOBOX PROTEIN ENGRAILED"/>
    <property type="match status" value="1"/>
</dbReference>
<dbReference type="PANTHER" id="PTHR24341:SF6">
    <property type="entry name" value="HOMEOBOX PROTEIN INVECTED"/>
    <property type="match status" value="1"/>
</dbReference>
<dbReference type="Pfam" id="PF10525">
    <property type="entry name" value="Engrail_1_C_sig"/>
    <property type="match status" value="1"/>
</dbReference>
<dbReference type="Pfam" id="PF00046">
    <property type="entry name" value="Homeodomain"/>
    <property type="match status" value="1"/>
</dbReference>
<dbReference type="PRINTS" id="PR00026">
    <property type="entry name" value="ENGRAILED"/>
</dbReference>
<dbReference type="PRINTS" id="PR00024">
    <property type="entry name" value="HOMEOBOX"/>
</dbReference>
<dbReference type="SMART" id="SM00389">
    <property type="entry name" value="HOX"/>
    <property type="match status" value="1"/>
</dbReference>
<dbReference type="SUPFAM" id="SSF46689">
    <property type="entry name" value="Homeodomain-like"/>
    <property type="match status" value="1"/>
</dbReference>
<dbReference type="PROSITE" id="PS00033">
    <property type="entry name" value="ENGRAILED"/>
    <property type="match status" value="1"/>
</dbReference>
<dbReference type="PROSITE" id="PS00027">
    <property type="entry name" value="HOMEOBOX_1"/>
    <property type="match status" value="1"/>
</dbReference>
<dbReference type="PROSITE" id="PS50071">
    <property type="entry name" value="HOMEOBOX_2"/>
    <property type="match status" value="1"/>
</dbReference>
<keyword id="KW-0217">Developmental protein</keyword>
<keyword id="KW-0238">DNA-binding</keyword>
<keyword id="KW-0371">Homeobox</keyword>
<keyword id="KW-0539">Nucleus</keyword>
<gene>
    <name type="primary">EN</name>
</gene>
<comment type="subcellular location">
    <subcellularLocation>
        <location evidence="3">Nucleus</location>
    </subcellularLocation>
</comment>
<comment type="similarity">
    <text evidence="3">Belongs to the engrailed homeobox family.</text>
</comment>